<evidence type="ECO:0000250" key="1"/>
<evidence type="ECO:0000255" key="2"/>
<evidence type="ECO:0000305" key="3"/>
<feature type="signal peptide" evidence="2">
    <location>
        <begin position="1"/>
        <end position="25"/>
    </location>
</feature>
<feature type="chain" id="PRO_0000030912" description="Ribonuclease pancreatic">
    <location>
        <begin position="26"/>
        <end position="149"/>
    </location>
</feature>
<feature type="active site" description="Proton acceptor" evidence="1">
    <location>
        <position position="37"/>
    </location>
</feature>
<feature type="active site" description="Proton donor" evidence="1">
    <location>
        <position position="144"/>
    </location>
</feature>
<feature type="binding site" evidence="1">
    <location>
        <position position="32"/>
    </location>
    <ligand>
        <name>substrate</name>
    </ligand>
</feature>
<feature type="binding site" evidence="1">
    <location>
        <position position="35"/>
    </location>
    <ligand>
        <name>substrate</name>
    </ligand>
</feature>
<feature type="binding site" evidence="1">
    <location>
        <begin position="66"/>
        <end position="70"/>
    </location>
    <ligand>
        <name>substrate</name>
    </ligand>
</feature>
<feature type="binding site" evidence="1">
    <location>
        <position position="91"/>
    </location>
    <ligand>
        <name>substrate</name>
    </ligand>
</feature>
<feature type="binding site" evidence="1">
    <location>
        <position position="110"/>
    </location>
    <ligand>
        <name>substrate</name>
    </ligand>
</feature>
<feature type="glycosylation site" description="N-linked (GlcNAc...) asparagine" evidence="2">
    <location>
        <position position="87"/>
    </location>
</feature>
<feature type="disulfide bond" evidence="1">
    <location>
        <begin position="51"/>
        <end position="109"/>
    </location>
</feature>
<feature type="disulfide bond" evidence="1">
    <location>
        <begin position="65"/>
        <end position="120"/>
    </location>
</feature>
<feature type="disulfide bond" evidence="1">
    <location>
        <begin position="83"/>
        <end position="135"/>
    </location>
</feature>
<feature type="disulfide bond" evidence="1">
    <location>
        <begin position="90"/>
        <end position="97"/>
    </location>
</feature>
<accession>Q9WTT5</accession>
<reference key="1">
    <citation type="journal article" date="1999" name="Mol. Phylogenet. Evol.">
        <title>The phylogenetic position of 'Acomyinae' (Rodentia, Mammalia) as sister group of a Murinae + Gerbillinae clade: evidence from the nuclear ribonuclease gene.</title>
        <authorList>
            <person name="Dubois J.-Y.F."/>
            <person name="Catzeflis F.M."/>
            <person name="Beintema J.J."/>
        </authorList>
    </citation>
    <scope>NUCLEOTIDE SEQUENCE [GENOMIC DNA]</scope>
</reference>
<name>RNAS1_ACOCA</name>
<dbReference type="EC" id="4.6.1.18"/>
<dbReference type="EMBL" id="AJ005772">
    <property type="protein sequence ID" value="CAB41464.1"/>
    <property type="molecule type" value="Genomic_DNA"/>
</dbReference>
<dbReference type="SMR" id="Q9WTT5"/>
<dbReference type="GlyCosmos" id="Q9WTT5">
    <property type="glycosylation" value="1 site, No reported glycans"/>
</dbReference>
<dbReference type="GO" id="GO:0005576">
    <property type="term" value="C:extracellular region"/>
    <property type="evidence" value="ECO:0007669"/>
    <property type="project" value="UniProtKB-SubCell"/>
</dbReference>
<dbReference type="GO" id="GO:0016829">
    <property type="term" value="F:lyase activity"/>
    <property type="evidence" value="ECO:0007669"/>
    <property type="project" value="UniProtKB-KW"/>
</dbReference>
<dbReference type="GO" id="GO:0003676">
    <property type="term" value="F:nucleic acid binding"/>
    <property type="evidence" value="ECO:0007669"/>
    <property type="project" value="InterPro"/>
</dbReference>
<dbReference type="GO" id="GO:0004522">
    <property type="term" value="F:ribonuclease A activity"/>
    <property type="evidence" value="ECO:0007669"/>
    <property type="project" value="UniProtKB-EC"/>
</dbReference>
<dbReference type="GO" id="GO:0050830">
    <property type="term" value="P:defense response to Gram-positive bacterium"/>
    <property type="evidence" value="ECO:0007669"/>
    <property type="project" value="TreeGrafter"/>
</dbReference>
<dbReference type="CDD" id="cd06265">
    <property type="entry name" value="RNase_A_canonical"/>
    <property type="match status" value="1"/>
</dbReference>
<dbReference type="FunFam" id="3.10.130.10:FF:000001">
    <property type="entry name" value="Ribonuclease pancreatic"/>
    <property type="match status" value="1"/>
</dbReference>
<dbReference type="Gene3D" id="3.10.130.10">
    <property type="entry name" value="Ribonuclease A-like domain"/>
    <property type="match status" value="1"/>
</dbReference>
<dbReference type="InterPro" id="IPR001427">
    <property type="entry name" value="RNaseA"/>
</dbReference>
<dbReference type="InterPro" id="IPR036816">
    <property type="entry name" value="RNaseA-like_dom_sf"/>
</dbReference>
<dbReference type="InterPro" id="IPR023411">
    <property type="entry name" value="RNaseA_AS"/>
</dbReference>
<dbReference type="InterPro" id="IPR023412">
    <property type="entry name" value="RNaseA_domain"/>
</dbReference>
<dbReference type="PANTHER" id="PTHR11437">
    <property type="entry name" value="RIBONUCLEASE"/>
    <property type="match status" value="1"/>
</dbReference>
<dbReference type="PANTHER" id="PTHR11437:SF24">
    <property type="entry name" value="RIBONUCLEASE PANCREATIC"/>
    <property type="match status" value="1"/>
</dbReference>
<dbReference type="Pfam" id="PF00074">
    <property type="entry name" value="RnaseA"/>
    <property type="match status" value="1"/>
</dbReference>
<dbReference type="PRINTS" id="PR00794">
    <property type="entry name" value="RIBONUCLEASE"/>
</dbReference>
<dbReference type="SMART" id="SM00092">
    <property type="entry name" value="RNAse_Pc"/>
    <property type="match status" value="1"/>
</dbReference>
<dbReference type="SUPFAM" id="SSF54076">
    <property type="entry name" value="RNase A-like"/>
    <property type="match status" value="1"/>
</dbReference>
<dbReference type="PROSITE" id="PS00127">
    <property type="entry name" value="RNASE_PANCREATIC"/>
    <property type="match status" value="1"/>
</dbReference>
<proteinExistence type="evidence at transcript level"/>
<organism>
    <name type="scientific">Acomys cahirinus</name>
    <name type="common">Cairo spiny mouse</name>
    <dbReference type="NCBI Taxonomy" id="10068"/>
    <lineage>
        <taxon>Eukaryota</taxon>
        <taxon>Metazoa</taxon>
        <taxon>Chordata</taxon>
        <taxon>Craniata</taxon>
        <taxon>Vertebrata</taxon>
        <taxon>Euteleostomi</taxon>
        <taxon>Mammalia</taxon>
        <taxon>Eutheria</taxon>
        <taxon>Euarchontoglires</taxon>
        <taxon>Glires</taxon>
        <taxon>Rodentia</taxon>
        <taxon>Myomorpha</taxon>
        <taxon>Muroidea</taxon>
        <taxon>Muridae</taxon>
        <taxon>Deomyinae</taxon>
        <taxon>Acomys</taxon>
    </lineage>
</organism>
<protein>
    <recommendedName>
        <fullName>Ribonuclease pancreatic</fullName>
        <ecNumber>4.6.1.18</ecNumber>
    </recommendedName>
    <alternativeName>
        <fullName>RNase 1</fullName>
    </alternativeName>
    <alternativeName>
        <fullName>RNase A</fullName>
    </alternativeName>
</protein>
<sequence>MGLEKSLILLPLLVLVLAWVQPSLGKETPAMKFERQHMDSAGSSSSSPTYCNQMMKRREMTKGSCKRVNTFVHEPLADVQAVCSQKNVTCKNGKKNCYKSRSALTITDCRLKGNSKYPDCDYQTSHQQKHIIVACEGSPYVPVHFDASV</sequence>
<gene>
    <name type="primary">RNASE1</name>
</gene>
<comment type="function">
    <text evidence="1">Endonuclease that catalyzes the cleavage of RNA on the 3' side of pyrimidine nucleotides. Acts on single-stranded and double-stranded RNA (By similarity).</text>
</comment>
<comment type="catalytic activity">
    <reaction>
        <text>an [RNA] containing cytidine + H2O = an [RNA]-3'-cytidine-3'-phosphate + a 5'-hydroxy-ribonucleotide-3'-[RNA].</text>
        <dbReference type="EC" id="4.6.1.18"/>
    </reaction>
</comment>
<comment type="catalytic activity">
    <reaction>
        <text>an [RNA] containing uridine + H2O = an [RNA]-3'-uridine-3'-phosphate + a 5'-hydroxy-ribonucleotide-3'-[RNA].</text>
        <dbReference type="EC" id="4.6.1.18"/>
    </reaction>
</comment>
<comment type="subunit">
    <text evidence="1">Monomer. Interacts with and forms tight 1:1 complexes with RNH1. Dimerization of two such complexes may occur. Interaction with RNH1 inhibits this protein (By similarity).</text>
</comment>
<comment type="subcellular location">
    <subcellularLocation>
        <location>Secreted</location>
    </subcellularLocation>
</comment>
<comment type="tissue specificity">
    <text>Pancreas.</text>
</comment>
<comment type="similarity">
    <text evidence="3">Belongs to the pancreatic ribonuclease family.</text>
</comment>
<keyword id="KW-1015">Disulfide bond</keyword>
<keyword id="KW-0255">Endonuclease</keyword>
<keyword id="KW-0325">Glycoprotein</keyword>
<keyword id="KW-0378">Hydrolase</keyword>
<keyword id="KW-0456">Lyase</keyword>
<keyword id="KW-0540">Nuclease</keyword>
<keyword id="KW-0964">Secreted</keyword>
<keyword id="KW-0732">Signal</keyword>